<gene>
    <name type="primary">fic1</name>
    <name type="ORF">SPBC83.18c</name>
</gene>
<keyword id="KW-0131">Cell cycle</keyword>
<keyword id="KW-0132">Cell division</keyword>
<keyword id="KW-0963">Cytoplasm</keyword>
<keyword id="KW-0498">Mitosis</keyword>
<keyword id="KW-0539">Nucleus</keyword>
<keyword id="KW-1185">Reference proteome</keyword>
<evidence type="ECO:0000255" key="1">
    <source>
        <dbReference type="PROSITE-ProRule" id="PRU00041"/>
    </source>
</evidence>
<evidence type="ECO:0000256" key="2">
    <source>
        <dbReference type="SAM" id="MobiDB-lite"/>
    </source>
</evidence>
<evidence type="ECO:0000269" key="3">
    <source>
    </source>
</evidence>
<evidence type="ECO:0000269" key="4">
    <source>
    </source>
</evidence>
<evidence type="ECO:0000305" key="5"/>
<comment type="function">
    <text evidence="4">Involved in the ingression of the plasma membrane during cytokinesis, leading to the separation of the daughter cells. Unlike its S.cerevisiae ortholog INN1, it does not play an essential role, probably because the actinomyosin ring is connected to the cell cortex by many more proteins.</text>
</comment>
<comment type="subunit">
    <text evidence="4">Interacts with cdc15 and imp2.</text>
</comment>
<comment type="subcellular location">
    <subcellularLocation>
        <location evidence="3">Cytoplasm</location>
    </subcellularLocation>
    <subcellularLocation>
        <location evidence="3">Nucleus</location>
    </subcellularLocation>
    <text evidence="4">Localizes at the barrier septum and the cell tip.</text>
</comment>
<comment type="similarity">
    <text evidence="5">Belongs to the INN1/fic1 family.</text>
</comment>
<feature type="chain" id="PRO_0000303953" description="Ingression protein fic1">
    <location>
        <begin position="1"/>
        <end position="272"/>
    </location>
</feature>
<feature type="domain" description="C2" evidence="1">
    <location>
        <begin position="1"/>
        <end position="107"/>
    </location>
</feature>
<feature type="region of interest" description="Disordered" evidence="2">
    <location>
        <begin position="155"/>
        <end position="187"/>
    </location>
</feature>
<feature type="compositionally biased region" description="Basic residues" evidence="2">
    <location>
        <begin position="158"/>
        <end position="170"/>
    </location>
</feature>
<sequence>MSKNPLGTLVVRIWKAKNLPNKALVGKQSPYCVCRVGEVVKRTQTDKRSGQEPSWNAVLEFNIPSESYHIMKITVFHEGFRKHPHLIGDTVLSFEKAMKEELQSEWYELKNEFQFAGELSVQFKFIPTDPLYFDRASSKPVLQFPYSSVAALTPVPKKPSKPSKPRKKVPVSHPLPPTPPSREEHVSVPRESSLFTYEDDPLPSFPSPYMVDDYYTQDVFVSDNVNDYSYGVQNPTNPRLSVEDYDANHSSLPPVPPPHLILPTASSSQIFH</sequence>
<dbReference type="EMBL" id="CU329671">
    <property type="protein sequence ID" value="CAB36880.1"/>
    <property type="molecule type" value="Genomic_DNA"/>
</dbReference>
<dbReference type="PIR" id="T40707">
    <property type="entry name" value="T40707"/>
</dbReference>
<dbReference type="RefSeq" id="NP_595651.1">
    <property type="nucleotide sequence ID" value="NM_001021545.2"/>
</dbReference>
<dbReference type="SMR" id="O94701"/>
<dbReference type="BioGRID" id="277717">
    <property type="interactions" value="31"/>
</dbReference>
<dbReference type="STRING" id="284812.O94701"/>
<dbReference type="iPTMnet" id="O94701"/>
<dbReference type="PaxDb" id="4896-SPBC83.18c.1"/>
<dbReference type="EnsemblFungi" id="SPBC83.18c.1">
    <property type="protein sequence ID" value="SPBC83.18c.1:pep"/>
    <property type="gene ID" value="SPBC83.18c"/>
</dbReference>
<dbReference type="GeneID" id="2541203"/>
<dbReference type="KEGG" id="spo:2541203"/>
<dbReference type="PomBase" id="SPBC83.18c">
    <property type="gene designation" value="fic1"/>
</dbReference>
<dbReference type="VEuPathDB" id="FungiDB:SPBC83.18c"/>
<dbReference type="eggNOG" id="ENOG502RDJ2">
    <property type="taxonomic scope" value="Eukaryota"/>
</dbReference>
<dbReference type="HOGENOM" id="CLU_977141_0_0_1"/>
<dbReference type="InParanoid" id="O94701"/>
<dbReference type="OMA" id="TMPYATP"/>
<dbReference type="PRO" id="PR:O94701"/>
<dbReference type="Proteomes" id="UP000002485">
    <property type="component" value="Chromosome II"/>
</dbReference>
<dbReference type="GO" id="GO:0051285">
    <property type="term" value="C:cell cortex of cell tip"/>
    <property type="evidence" value="ECO:0000314"/>
    <property type="project" value="PomBase"/>
</dbReference>
<dbReference type="GO" id="GO:0032153">
    <property type="term" value="C:cell division site"/>
    <property type="evidence" value="ECO:0000314"/>
    <property type="project" value="PomBase"/>
</dbReference>
<dbReference type="GO" id="GO:0051286">
    <property type="term" value="C:cell tip"/>
    <property type="evidence" value="ECO:0000314"/>
    <property type="project" value="PomBase"/>
</dbReference>
<dbReference type="GO" id="GO:0110085">
    <property type="term" value="C:mitotic actomyosin contractile ring"/>
    <property type="evidence" value="ECO:0000314"/>
    <property type="project" value="PomBase"/>
</dbReference>
<dbReference type="GO" id="GO:0120105">
    <property type="term" value="C:mitotic actomyosin contractile ring, intermediate layer"/>
    <property type="evidence" value="ECO:0000314"/>
    <property type="project" value="PomBase"/>
</dbReference>
<dbReference type="GO" id="GO:0005634">
    <property type="term" value="C:nucleus"/>
    <property type="evidence" value="ECO:0000314"/>
    <property type="project" value="PomBase"/>
</dbReference>
<dbReference type="GO" id="GO:0106006">
    <property type="term" value="F:cytoskeletal protein-membrane anchor activity"/>
    <property type="evidence" value="ECO:0000353"/>
    <property type="project" value="PomBase"/>
</dbReference>
<dbReference type="GO" id="GO:0005543">
    <property type="term" value="F:phospholipid binding"/>
    <property type="evidence" value="ECO:0000266"/>
    <property type="project" value="PomBase"/>
</dbReference>
<dbReference type="GO" id="GO:0051666">
    <property type="term" value="P:actin cortical patch localization"/>
    <property type="evidence" value="ECO:0000315"/>
    <property type="project" value="PomBase"/>
</dbReference>
<dbReference type="GO" id="GO:0061245">
    <property type="term" value="P:establishment or maintenance of bipolar cell polarity"/>
    <property type="evidence" value="ECO:0000314"/>
    <property type="project" value="PomBase"/>
</dbReference>
<dbReference type="GO" id="GO:1903475">
    <property type="term" value="P:mitotic actomyosin contractile ring assembly"/>
    <property type="evidence" value="ECO:0000315"/>
    <property type="project" value="PomBase"/>
</dbReference>
<dbReference type="GO" id="GO:1902404">
    <property type="term" value="P:mitotic actomyosin contractile ring contraction"/>
    <property type="evidence" value="ECO:0000269"/>
    <property type="project" value="PomBase"/>
</dbReference>
<dbReference type="GO" id="GO:0000281">
    <property type="term" value="P:mitotic cytokinesis"/>
    <property type="evidence" value="ECO:0000269"/>
    <property type="project" value="PomBase"/>
</dbReference>
<dbReference type="CDD" id="cd08681">
    <property type="entry name" value="C2_fungal_Inn1p-like"/>
    <property type="match status" value="1"/>
</dbReference>
<dbReference type="Gene3D" id="2.60.40.150">
    <property type="entry name" value="C2 domain"/>
    <property type="match status" value="1"/>
</dbReference>
<dbReference type="InterPro" id="IPR000008">
    <property type="entry name" value="C2_dom"/>
</dbReference>
<dbReference type="InterPro" id="IPR035892">
    <property type="entry name" value="C2_domain_sf"/>
</dbReference>
<dbReference type="InterPro" id="IPR037791">
    <property type="entry name" value="C2_fungal_Inn1"/>
</dbReference>
<dbReference type="InterPro" id="IPR052981">
    <property type="entry name" value="Ingression_C2_domain"/>
</dbReference>
<dbReference type="PANTHER" id="PTHR47052">
    <property type="entry name" value="CONSERVED SERINE PROLINE-RICH PROTEIN (AFU_ORTHOLOGUE AFUA_2G01790)"/>
    <property type="match status" value="1"/>
</dbReference>
<dbReference type="PANTHER" id="PTHR47052:SF3">
    <property type="entry name" value="INGRESSION PROTEIN 1"/>
    <property type="match status" value="1"/>
</dbReference>
<dbReference type="Pfam" id="PF00168">
    <property type="entry name" value="C2"/>
    <property type="match status" value="1"/>
</dbReference>
<dbReference type="SMART" id="SM00239">
    <property type="entry name" value="C2"/>
    <property type="match status" value="1"/>
</dbReference>
<dbReference type="SUPFAM" id="SSF49562">
    <property type="entry name" value="C2 domain (Calcium/lipid-binding domain, CaLB)"/>
    <property type="match status" value="1"/>
</dbReference>
<dbReference type="PROSITE" id="PS50004">
    <property type="entry name" value="C2"/>
    <property type="match status" value="1"/>
</dbReference>
<organism>
    <name type="scientific">Schizosaccharomyces pombe (strain 972 / ATCC 24843)</name>
    <name type="common">Fission yeast</name>
    <dbReference type="NCBI Taxonomy" id="284812"/>
    <lineage>
        <taxon>Eukaryota</taxon>
        <taxon>Fungi</taxon>
        <taxon>Dikarya</taxon>
        <taxon>Ascomycota</taxon>
        <taxon>Taphrinomycotina</taxon>
        <taxon>Schizosaccharomycetes</taxon>
        <taxon>Schizosaccharomycetales</taxon>
        <taxon>Schizosaccharomycetaceae</taxon>
        <taxon>Schizosaccharomyces</taxon>
    </lineage>
</organism>
<protein>
    <recommendedName>
        <fullName>Ingression protein fic1</fullName>
    </recommendedName>
    <alternativeName>
        <fullName>Cdc15-interacting C2 domain-containing protein 1</fullName>
    </alternativeName>
</protein>
<reference key="1">
    <citation type="journal article" date="2002" name="Nature">
        <title>The genome sequence of Schizosaccharomyces pombe.</title>
        <authorList>
            <person name="Wood V."/>
            <person name="Gwilliam R."/>
            <person name="Rajandream M.A."/>
            <person name="Lyne M.H."/>
            <person name="Lyne R."/>
            <person name="Stewart A."/>
            <person name="Sgouros J.G."/>
            <person name="Peat N."/>
            <person name="Hayles J."/>
            <person name="Baker S.G."/>
            <person name="Basham D."/>
            <person name="Bowman S."/>
            <person name="Brooks K."/>
            <person name="Brown D."/>
            <person name="Brown S."/>
            <person name="Chillingworth T."/>
            <person name="Churcher C.M."/>
            <person name="Collins M."/>
            <person name="Connor R."/>
            <person name="Cronin A."/>
            <person name="Davis P."/>
            <person name="Feltwell T."/>
            <person name="Fraser A."/>
            <person name="Gentles S."/>
            <person name="Goble A."/>
            <person name="Hamlin N."/>
            <person name="Harris D.E."/>
            <person name="Hidalgo J."/>
            <person name="Hodgson G."/>
            <person name="Holroyd S."/>
            <person name="Hornsby T."/>
            <person name="Howarth S."/>
            <person name="Huckle E.J."/>
            <person name="Hunt S."/>
            <person name="Jagels K."/>
            <person name="James K.D."/>
            <person name="Jones L."/>
            <person name="Jones M."/>
            <person name="Leather S."/>
            <person name="McDonald S."/>
            <person name="McLean J."/>
            <person name="Mooney P."/>
            <person name="Moule S."/>
            <person name="Mungall K.L."/>
            <person name="Murphy L.D."/>
            <person name="Niblett D."/>
            <person name="Odell C."/>
            <person name="Oliver K."/>
            <person name="O'Neil S."/>
            <person name="Pearson D."/>
            <person name="Quail M.A."/>
            <person name="Rabbinowitsch E."/>
            <person name="Rutherford K.M."/>
            <person name="Rutter S."/>
            <person name="Saunders D."/>
            <person name="Seeger K."/>
            <person name="Sharp S."/>
            <person name="Skelton J."/>
            <person name="Simmonds M.N."/>
            <person name="Squares R."/>
            <person name="Squares S."/>
            <person name="Stevens K."/>
            <person name="Taylor K."/>
            <person name="Taylor R.G."/>
            <person name="Tivey A."/>
            <person name="Walsh S.V."/>
            <person name="Warren T."/>
            <person name="Whitehead S."/>
            <person name="Woodward J.R."/>
            <person name="Volckaert G."/>
            <person name="Aert R."/>
            <person name="Robben J."/>
            <person name="Grymonprez B."/>
            <person name="Weltjens I."/>
            <person name="Vanstreels E."/>
            <person name="Rieger M."/>
            <person name="Schaefer M."/>
            <person name="Mueller-Auer S."/>
            <person name="Gabel C."/>
            <person name="Fuchs M."/>
            <person name="Duesterhoeft A."/>
            <person name="Fritzc C."/>
            <person name="Holzer E."/>
            <person name="Moestl D."/>
            <person name="Hilbert H."/>
            <person name="Borzym K."/>
            <person name="Langer I."/>
            <person name="Beck A."/>
            <person name="Lehrach H."/>
            <person name="Reinhardt R."/>
            <person name="Pohl T.M."/>
            <person name="Eger P."/>
            <person name="Zimmermann W."/>
            <person name="Wedler H."/>
            <person name="Wambutt R."/>
            <person name="Purnelle B."/>
            <person name="Goffeau A."/>
            <person name="Cadieu E."/>
            <person name="Dreano S."/>
            <person name="Gloux S."/>
            <person name="Lelaure V."/>
            <person name="Mottier S."/>
            <person name="Galibert F."/>
            <person name="Aves S.J."/>
            <person name="Xiang Z."/>
            <person name="Hunt C."/>
            <person name="Moore K."/>
            <person name="Hurst S.M."/>
            <person name="Lucas M."/>
            <person name="Rochet M."/>
            <person name="Gaillardin C."/>
            <person name="Tallada V.A."/>
            <person name="Garzon A."/>
            <person name="Thode G."/>
            <person name="Daga R.R."/>
            <person name="Cruzado L."/>
            <person name="Jimenez J."/>
            <person name="Sanchez M."/>
            <person name="del Rey F."/>
            <person name="Benito J."/>
            <person name="Dominguez A."/>
            <person name="Revuelta J.L."/>
            <person name="Moreno S."/>
            <person name="Armstrong J."/>
            <person name="Forsburg S.L."/>
            <person name="Cerutti L."/>
            <person name="Lowe T."/>
            <person name="McCombie W.R."/>
            <person name="Paulsen I."/>
            <person name="Potashkin J."/>
            <person name="Shpakovski G.V."/>
            <person name="Ussery D."/>
            <person name="Barrell B.G."/>
            <person name="Nurse P."/>
        </authorList>
    </citation>
    <scope>NUCLEOTIDE SEQUENCE [LARGE SCALE GENOMIC DNA]</scope>
    <source>
        <strain>972 / ATCC 24843</strain>
    </source>
</reference>
<reference key="2">
    <citation type="journal article" date="2006" name="Nat. Biotechnol.">
        <title>ORFeome cloning and global analysis of protein localization in the fission yeast Schizosaccharomyces pombe.</title>
        <authorList>
            <person name="Matsuyama A."/>
            <person name="Arai R."/>
            <person name="Yashiroda Y."/>
            <person name="Shirai A."/>
            <person name="Kamata A."/>
            <person name="Sekido S."/>
            <person name="Kobayashi Y."/>
            <person name="Hashimoto A."/>
            <person name="Hamamoto M."/>
            <person name="Hiraoka Y."/>
            <person name="Horinouchi S."/>
            <person name="Yoshida M."/>
        </authorList>
    </citation>
    <scope>SUBCELLULAR LOCATION [LARGE SCALE ANALYSIS]</scope>
</reference>
<reference key="3">
    <citation type="journal article" date="2009" name="J. Cell Biol.">
        <title>The SH3 domains of two PCH family members cooperate in assembly of the Schizosaccharomyces pombe contractile ring.</title>
        <authorList>
            <person name="Roberts-Galbraith R.H."/>
            <person name="Chen J.-S."/>
            <person name="Wang J."/>
            <person name="Gould K.L."/>
        </authorList>
    </citation>
    <scope>INTERACTION WITH CDC15 AND IMP2</scope>
    <scope>FUNCTION</scope>
    <scope>SUBCELLULAR LOCATION</scope>
</reference>
<accession>O94701</accession>
<proteinExistence type="evidence at protein level"/>
<name>INN1_SCHPO</name>